<accession>Q732P2</accession>
<gene>
    <name evidence="1" type="primary">codY</name>
    <name type="ordered locus">BCE_3869</name>
</gene>
<proteinExistence type="inferred from homology"/>
<reference key="1">
    <citation type="journal article" date="2004" name="Nucleic Acids Res.">
        <title>The genome sequence of Bacillus cereus ATCC 10987 reveals metabolic adaptations and a large plasmid related to Bacillus anthracis pXO1.</title>
        <authorList>
            <person name="Rasko D.A."/>
            <person name="Ravel J."/>
            <person name="Oekstad O.A."/>
            <person name="Helgason E."/>
            <person name="Cer R.Z."/>
            <person name="Jiang L."/>
            <person name="Shores K.A."/>
            <person name="Fouts D.E."/>
            <person name="Tourasse N.J."/>
            <person name="Angiuoli S.V."/>
            <person name="Kolonay J.F."/>
            <person name="Nelson W.C."/>
            <person name="Kolstoe A.-B."/>
            <person name="Fraser C.M."/>
            <person name="Read T.D."/>
        </authorList>
    </citation>
    <scope>NUCLEOTIDE SEQUENCE [LARGE SCALE GENOMIC DNA]</scope>
    <source>
        <strain>ATCC 10987 / NRS 248</strain>
    </source>
</reference>
<keyword id="KW-0963">Cytoplasm</keyword>
<keyword id="KW-0238">DNA-binding</keyword>
<keyword id="KW-0597">Phosphoprotein</keyword>
<keyword id="KW-0678">Repressor</keyword>
<keyword id="KW-0804">Transcription</keyword>
<keyword id="KW-0805">Transcription regulation</keyword>
<comment type="function">
    <text evidence="1">DNA-binding global transcriptional regulator which is involved in the adaptive response to starvation and acts by directly or indirectly controlling the expression of numerous genes in response to nutrient availability. During rapid exponential growth, CodY is highly active and represses genes whose products allow adaptation to nutrient depletion.</text>
</comment>
<comment type="subcellular location">
    <subcellularLocation>
        <location evidence="1">Cytoplasm</location>
    </subcellularLocation>
</comment>
<comment type="similarity">
    <text evidence="1">Belongs to the CodY family.</text>
</comment>
<sequence length="259" mass="28757">MELLAKTRKLNALLQSAAGKPVNFREMSDTMCEVIEANVFVVSRRGKLLGYAIHQQIENERMKQMLAERQFPEEYTQSLFNITETSSNLDVNSAYTAFPVENKELFGQGLTTIVPIVGGGERLGTLVLARLGQEFLDDDLILAEYSSTVVGMEILREKAEEIEEEARSKAVVQMAISSLSYSELEAIEHIFEELNGTEGLLVASKIADRVGITRSVIVNALRKLESAGVIESRSLGMKGTYIKVLNDKFLHELAXLKTN</sequence>
<organism>
    <name type="scientific">Bacillus cereus (strain ATCC 10987 / NRS 248)</name>
    <dbReference type="NCBI Taxonomy" id="222523"/>
    <lineage>
        <taxon>Bacteria</taxon>
        <taxon>Bacillati</taxon>
        <taxon>Bacillota</taxon>
        <taxon>Bacilli</taxon>
        <taxon>Bacillales</taxon>
        <taxon>Bacillaceae</taxon>
        <taxon>Bacillus</taxon>
        <taxon>Bacillus cereus group</taxon>
    </lineage>
</organism>
<name>CODY_BACC1</name>
<evidence type="ECO:0000255" key="1">
    <source>
        <dbReference type="HAMAP-Rule" id="MF_00621"/>
    </source>
</evidence>
<dbReference type="EMBL" id="AE017194">
    <property type="protein sequence ID" value="AAS42774.1"/>
    <property type="molecule type" value="Genomic_DNA"/>
</dbReference>
<dbReference type="KEGG" id="bca:BCE_3869"/>
<dbReference type="HOGENOM" id="CLU_089581_0_0_9"/>
<dbReference type="Proteomes" id="UP000002527">
    <property type="component" value="Chromosome"/>
</dbReference>
<dbReference type="GO" id="GO:0005737">
    <property type="term" value="C:cytoplasm"/>
    <property type="evidence" value="ECO:0007669"/>
    <property type="project" value="UniProtKB-SubCell"/>
</dbReference>
<dbReference type="GO" id="GO:0003677">
    <property type="term" value="F:DNA binding"/>
    <property type="evidence" value="ECO:0007669"/>
    <property type="project" value="UniProtKB-UniRule"/>
</dbReference>
<dbReference type="GO" id="GO:0003700">
    <property type="term" value="F:DNA-binding transcription factor activity"/>
    <property type="evidence" value="ECO:0007669"/>
    <property type="project" value="InterPro"/>
</dbReference>
<dbReference type="GO" id="GO:0005525">
    <property type="term" value="F:GTP binding"/>
    <property type="evidence" value="ECO:0007669"/>
    <property type="project" value="InterPro"/>
</dbReference>
<dbReference type="GO" id="GO:0045892">
    <property type="term" value="P:negative regulation of DNA-templated transcription"/>
    <property type="evidence" value="ECO:0007669"/>
    <property type="project" value="UniProtKB-UniRule"/>
</dbReference>
<dbReference type="FunFam" id="1.10.10.10:FF:000034">
    <property type="entry name" value="GTP-sensing transcriptional pleiotropic repressor CodY"/>
    <property type="match status" value="1"/>
</dbReference>
<dbReference type="FunFam" id="3.30.450.40:FF:000003">
    <property type="entry name" value="GTP-sensing transcriptional pleiotropic repressor CodY"/>
    <property type="match status" value="1"/>
</dbReference>
<dbReference type="Gene3D" id="3.30.450.40">
    <property type="match status" value="1"/>
</dbReference>
<dbReference type="Gene3D" id="1.10.10.10">
    <property type="entry name" value="Winged helix-like DNA-binding domain superfamily/Winged helix DNA-binding domain"/>
    <property type="match status" value="1"/>
</dbReference>
<dbReference type="HAMAP" id="MF_00621">
    <property type="entry name" value="HTH_type_CodY"/>
    <property type="match status" value="1"/>
</dbReference>
<dbReference type="InterPro" id="IPR014154">
    <property type="entry name" value="CodY"/>
</dbReference>
<dbReference type="InterPro" id="IPR029016">
    <property type="entry name" value="GAF-like_dom_sf"/>
</dbReference>
<dbReference type="InterPro" id="IPR013198">
    <property type="entry name" value="GTP_trans_reg_CodY_C"/>
</dbReference>
<dbReference type="InterPro" id="IPR010312">
    <property type="entry name" value="Transc_reg_CodY_N"/>
</dbReference>
<dbReference type="InterPro" id="IPR036388">
    <property type="entry name" value="WH-like_DNA-bd_sf"/>
</dbReference>
<dbReference type="InterPro" id="IPR036390">
    <property type="entry name" value="WH_DNA-bd_sf"/>
</dbReference>
<dbReference type="NCBIfam" id="TIGR02787">
    <property type="entry name" value="codY_Gpos"/>
    <property type="match status" value="1"/>
</dbReference>
<dbReference type="NCBIfam" id="NF003170">
    <property type="entry name" value="PRK04158.1"/>
    <property type="match status" value="1"/>
</dbReference>
<dbReference type="PANTHER" id="PTHR40062:SF1">
    <property type="entry name" value="GLOBAL TRANSCRIPTIONAL REGULATOR CODY"/>
    <property type="match status" value="1"/>
</dbReference>
<dbReference type="PANTHER" id="PTHR40062">
    <property type="entry name" value="GTP-SENSING TRANSCRIPTIONAL PLEIOTROPIC REPRESSOR CODY"/>
    <property type="match status" value="1"/>
</dbReference>
<dbReference type="Pfam" id="PF06018">
    <property type="entry name" value="CodY"/>
    <property type="match status" value="1"/>
</dbReference>
<dbReference type="Pfam" id="PF08222">
    <property type="entry name" value="HTH_CodY"/>
    <property type="match status" value="1"/>
</dbReference>
<dbReference type="PIRSF" id="PIRSF011572">
    <property type="entry name" value="GTP_sensing_CodY"/>
    <property type="match status" value="1"/>
</dbReference>
<dbReference type="SUPFAM" id="SSF46785">
    <property type="entry name" value="Winged helix' DNA-binding domain"/>
    <property type="match status" value="1"/>
</dbReference>
<protein>
    <recommendedName>
        <fullName evidence="1">Global transcriptional regulator CodY</fullName>
    </recommendedName>
</protein>
<feature type="chain" id="PRO_0000213214" description="Global transcriptional regulator CodY">
    <location>
        <begin position="1"/>
        <end position="259"/>
    </location>
</feature>
<feature type="DNA-binding region" description="H-T-H motif" evidence="1">
    <location>
        <begin position="203"/>
        <end position="222"/>
    </location>
</feature>
<feature type="region of interest" description="GAF domain" evidence="1">
    <location>
        <begin position="1"/>
        <end position="155"/>
    </location>
</feature>
<feature type="modified residue" description="Phosphoserine" evidence="1">
    <location>
        <position position="215"/>
    </location>
</feature>